<organism>
    <name type="scientific">Haemophilus influenzae (strain ATCC 51907 / DSM 11121 / KW20 / Rd)</name>
    <dbReference type="NCBI Taxonomy" id="71421"/>
    <lineage>
        <taxon>Bacteria</taxon>
        <taxon>Pseudomonadati</taxon>
        <taxon>Pseudomonadota</taxon>
        <taxon>Gammaproteobacteria</taxon>
        <taxon>Pasteurellales</taxon>
        <taxon>Pasteurellaceae</taxon>
        <taxon>Haemophilus</taxon>
    </lineage>
</organism>
<sequence length="71" mass="8223">MSQTLQQTGLFDDEHADIGALFDHLDQIPSVELEKRWPSLLVEVIEVMQAEYCAKILQKIKQKRPLRSSWA</sequence>
<accession>P44216</accession>
<proteinExistence type="predicted"/>
<keyword id="KW-1185">Reference proteome</keyword>
<name>Y1490_HAEIN</name>
<feature type="chain" id="PRO_0000078073" description="Uncharacterized protein HI_1490">
    <location>
        <begin position="1"/>
        <end position="71"/>
    </location>
</feature>
<protein>
    <recommendedName>
        <fullName>Uncharacterized protein HI_1490</fullName>
    </recommendedName>
</protein>
<reference key="1">
    <citation type="journal article" date="1995" name="Science">
        <title>Whole-genome random sequencing and assembly of Haemophilus influenzae Rd.</title>
        <authorList>
            <person name="Fleischmann R.D."/>
            <person name="Adams M.D."/>
            <person name="White O."/>
            <person name="Clayton R.A."/>
            <person name="Kirkness E.F."/>
            <person name="Kerlavage A.R."/>
            <person name="Bult C.J."/>
            <person name="Tomb J.-F."/>
            <person name="Dougherty B.A."/>
            <person name="Merrick J.M."/>
            <person name="McKenney K."/>
            <person name="Sutton G.G."/>
            <person name="FitzHugh W."/>
            <person name="Fields C.A."/>
            <person name="Gocayne J.D."/>
            <person name="Scott J.D."/>
            <person name="Shirley R."/>
            <person name="Liu L.-I."/>
            <person name="Glodek A."/>
            <person name="Kelley J.M."/>
            <person name="Weidman J.F."/>
            <person name="Phillips C.A."/>
            <person name="Spriggs T."/>
            <person name="Hedblom E."/>
            <person name="Cotton M.D."/>
            <person name="Utterback T.R."/>
            <person name="Hanna M.C."/>
            <person name="Nguyen D.T."/>
            <person name="Saudek D.M."/>
            <person name="Brandon R.C."/>
            <person name="Fine L.D."/>
            <person name="Fritchman J.L."/>
            <person name="Fuhrmann J.L."/>
            <person name="Geoghagen N.S.M."/>
            <person name="Gnehm C.L."/>
            <person name="McDonald L.A."/>
            <person name="Small K.V."/>
            <person name="Fraser C.M."/>
            <person name="Smith H.O."/>
            <person name="Venter J.C."/>
        </authorList>
    </citation>
    <scope>NUCLEOTIDE SEQUENCE [LARGE SCALE GENOMIC DNA]</scope>
    <source>
        <strain>ATCC 51907 / DSM 11121 / KW20 / Rd</strain>
    </source>
</reference>
<dbReference type="EMBL" id="L42023">
    <property type="protein sequence ID" value="AAC23134.1"/>
    <property type="molecule type" value="Genomic_DNA"/>
</dbReference>
<dbReference type="PIR" id="A64032">
    <property type="entry name" value="A64032"/>
</dbReference>
<dbReference type="STRING" id="71421.HI_1490"/>
<dbReference type="EnsemblBacteria" id="AAC23134">
    <property type="protein sequence ID" value="AAC23134"/>
    <property type="gene ID" value="HI_1490"/>
</dbReference>
<dbReference type="KEGG" id="hin:HI_1490"/>
<dbReference type="eggNOG" id="COG5566">
    <property type="taxonomic scope" value="Bacteria"/>
</dbReference>
<dbReference type="HOGENOM" id="CLU_2734395_0_0_6"/>
<dbReference type="Proteomes" id="UP000000579">
    <property type="component" value="Chromosome"/>
</dbReference>
<gene>
    <name type="ordered locus">HI_1490</name>
</gene>